<comment type="function">
    <text evidence="1">Catalyzes the NADPH-dependent reduction of L-glutamate 5-phosphate into L-glutamate 5-semialdehyde and phosphate. The product spontaneously undergoes cyclization to form 1-pyrroline-5-carboxylate.</text>
</comment>
<comment type="catalytic activity">
    <reaction evidence="1">
        <text>L-glutamate 5-semialdehyde + phosphate + NADP(+) = L-glutamyl 5-phosphate + NADPH + H(+)</text>
        <dbReference type="Rhea" id="RHEA:19541"/>
        <dbReference type="ChEBI" id="CHEBI:15378"/>
        <dbReference type="ChEBI" id="CHEBI:43474"/>
        <dbReference type="ChEBI" id="CHEBI:57783"/>
        <dbReference type="ChEBI" id="CHEBI:58066"/>
        <dbReference type="ChEBI" id="CHEBI:58274"/>
        <dbReference type="ChEBI" id="CHEBI:58349"/>
        <dbReference type="EC" id="1.2.1.41"/>
    </reaction>
</comment>
<comment type="pathway">
    <text evidence="1">Amino-acid biosynthesis; L-proline biosynthesis; L-glutamate 5-semialdehyde from L-glutamate: step 2/2.</text>
</comment>
<comment type="subcellular location">
    <subcellularLocation>
        <location evidence="1">Cytoplasm</location>
    </subcellularLocation>
</comment>
<comment type="similarity">
    <text evidence="1">Belongs to the gamma-glutamyl phosphate reductase family.</text>
</comment>
<evidence type="ECO:0000255" key="1">
    <source>
        <dbReference type="HAMAP-Rule" id="MF_00412"/>
    </source>
</evidence>
<proteinExistence type="inferred from homology"/>
<dbReference type="EC" id="1.2.1.41" evidence="1"/>
<dbReference type="EMBL" id="FM200053">
    <property type="protein sequence ID" value="CAR60494.1"/>
    <property type="molecule type" value="Genomic_DNA"/>
</dbReference>
<dbReference type="RefSeq" id="WP_000893229.1">
    <property type="nucleotide sequence ID" value="NC_011147.1"/>
</dbReference>
<dbReference type="SMR" id="B5BDP7"/>
<dbReference type="KEGG" id="sek:SSPA2270"/>
<dbReference type="HOGENOM" id="CLU_030231_0_0_6"/>
<dbReference type="UniPathway" id="UPA00098">
    <property type="reaction ID" value="UER00360"/>
</dbReference>
<dbReference type="Proteomes" id="UP000001869">
    <property type="component" value="Chromosome"/>
</dbReference>
<dbReference type="GO" id="GO:0005737">
    <property type="term" value="C:cytoplasm"/>
    <property type="evidence" value="ECO:0007669"/>
    <property type="project" value="UniProtKB-SubCell"/>
</dbReference>
<dbReference type="GO" id="GO:0004350">
    <property type="term" value="F:glutamate-5-semialdehyde dehydrogenase activity"/>
    <property type="evidence" value="ECO:0007669"/>
    <property type="project" value="UniProtKB-UniRule"/>
</dbReference>
<dbReference type="GO" id="GO:0050661">
    <property type="term" value="F:NADP binding"/>
    <property type="evidence" value="ECO:0007669"/>
    <property type="project" value="InterPro"/>
</dbReference>
<dbReference type="GO" id="GO:0055129">
    <property type="term" value="P:L-proline biosynthetic process"/>
    <property type="evidence" value="ECO:0007669"/>
    <property type="project" value="UniProtKB-UniRule"/>
</dbReference>
<dbReference type="CDD" id="cd07079">
    <property type="entry name" value="ALDH_F18-19_ProA-GPR"/>
    <property type="match status" value="1"/>
</dbReference>
<dbReference type="FunFam" id="3.40.309.10:FF:000006">
    <property type="entry name" value="Gamma-glutamyl phosphate reductase"/>
    <property type="match status" value="1"/>
</dbReference>
<dbReference type="Gene3D" id="3.40.605.10">
    <property type="entry name" value="Aldehyde Dehydrogenase, Chain A, domain 1"/>
    <property type="match status" value="1"/>
</dbReference>
<dbReference type="Gene3D" id="3.40.309.10">
    <property type="entry name" value="Aldehyde Dehydrogenase, Chain A, domain 2"/>
    <property type="match status" value="1"/>
</dbReference>
<dbReference type="HAMAP" id="MF_00412">
    <property type="entry name" value="ProA"/>
    <property type="match status" value="1"/>
</dbReference>
<dbReference type="InterPro" id="IPR016161">
    <property type="entry name" value="Ald_DH/histidinol_DH"/>
</dbReference>
<dbReference type="InterPro" id="IPR016163">
    <property type="entry name" value="Ald_DH_C"/>
</dbReference>
<dbReference type="InterPro" id="IPR016162">
    <property type="entry name" value="Ald_DH_N"/>
</dbReference>
<dbReference type="InterPro" id="IPR015590">
    <property type="entry name" value="Aldehyde_DH_dom"/>
</dbReference>
<dbReference type="InterPro" id="IPR020593">
    <property type="entry name" value="G-glutamylP_reductase_CS"/>
</dbReference>
<dbReference type="InterPro" id="IPR012134">
    <property type="entry name" value="Glu-5-SA_DH"/>
</dbReference>
<dbReference type="InterPro" id="IPR000965">
    <property type="entry name" value="GPR_dom"/>
</dbReference>
<dbReference type="NCBIfam" id="NF001221">
    <property type="entry name" value="PRK00197.1"/>
    <property type="match status" value="1"/>
</dbReference>
<dbReference type="NCBIfam" id="TIGR00407">
    <property type="entry name" value="proA"/>
    <property type="match status" value="1"/>
</dbReference>
<dbReference type="PANTHER" id="PTHR11063:SF8">
    <property type="entry name" value="DELTA-1-PYRROLINE-5-CARBOXYLATE SYNTHASE"/>
    <property type="match status" value="1"/>
</dbReference>
<dbReference type="PANTHER" id="PTHR11063">
    <property type="entry name" value="GLUTAMATE SEMIALDEHYDE DEHYDROGENASE"/>
    <property type="match status" value="1"/>
</dbReference>
<dbReference type="Pfam" id="PF00171">
    <property type="entry name" value="Aldedh"/>
    <property type="match status" value="1"/>
</dbReference>
<dbReference type="PIRSF" id="PIRSF000151">
    <property type="entry name" value="GPR"/>
    <property type="match status" value="1"/>
</dbReference>
<dbReference type="SUPFAM" id="SSF53720">
    <property type="entry name" value="ALDH-like"/>
    <property type="match status" value="1"/>
</dbReference>
<dbReference type="PROSITE" id="PS01223">
    <property type="entry name" value="PROA"/>
    <property type="match status" value="1"/>
</dbReference>
<feature type="chain" id="PRO_1000193650" description="Gamma-glutamyl phosphate reductase">
    <location>
        <begin position="1"/>
        <end position="416"/>
    </location>
</feature>
<gene>
    <name evidence="1" type="primary">proA</name>
    <name type="ordered locus">SSPA2270</name>
</gene>
<reference key="1">
    <citation type="journal article" date="2009" name="BMC Genomics">
        <title>Pseudogene accumulation in the evolutionary histories of Salmonella enterica serovars Paratyphi A and Typhi.</title>
        <authorList>
            <person name="Holt K.E."/>
            <person name="Thomson N.R."/>
            <person name="Wain J."/>
            <person name="Langridge G.C."/>
            <person name="Hasan R."/>
            <person name="Bhutta Z.A."/>
            <person name="Quail M.A."/>
            <person name="Norbertczak H."/>
            <person name="Walker D."/>
            <person name="Simmonds M."/>
            <person name="White B."/>
            <person name="Bason N."/>
            <person name="Mungall K."/>
            <person name="Dougan G."/>
            <person name="Parkhill J."/>
        </authorList>
    </citation>
    <scope>NUCLEOTIDE SEQUENCE [LARGE SCALE GENOMIC DNA]</scope>
    <source>
        <strain>AKU_12601</strain>
    </source>
</reference>
<organism>
    <name type="scientific">Salmonella paratyphi A (strain AKU_12601)</name>
    <dbReference type="NCBI Taxonomy" id="554290"/>
    <lineage>
        <taxon>Bacteria</taxon>
        <taxon>Pseudomonadati</taxon>
        <taxon>Pseudomonadota</taxon>
        <taxon>Gammaproteobacteria</taxon>
        <taxon>Enterobacterales</taxon>
        <taxon>Enterobacteriaceae</taxon>
        <taxon>Salmonella</taxon>
    </lineage>
</organism>
<name>PROA_SALPK</name>
<sequence length="416" mass="44653">MLEQMGIAAKAASYKLALLSSGEKNRVLEKIADELEAQMESILSANVQDVEQARANGLSEAMLDRLALTPARLKAIADDVRQVCNLADPVGQVIDGGLLDSGLRLERRRVPLGVVGVIYEARPNVTVDVASLCLKTGNAVILRGGKETHRTNAATVRVIQKALKACGLPEAAVQAIDNPDRSLVNEMLRMDKYIDMLIPRGGAGLHKLCREQSTIPVITGGIGVCHIFVDSSADIAPALKIIVNAKTQRPSTCNTVETLLVHQDIAERFLPVLSKQMAESGVTLHGDETVMQVLHGPAKLVPLKPEELDNEFLSLDLNVVVVENMDGAIGHIREHGTQHSDAILTCDMHNAARFVNEVDSAAVYVNASTRFTDGGQFGLGAEVAVSTQKLHARGPMGLEALTTYKWIGFGDGTIRA</sequence>
<keyword id="KW-0028">Amino-acid biosynthesis</keyword>
<keyword id="KW-0963">Cytoplasm</keyword>
<keyword id="KW-0521">NADP</keyword>
<keyword id="KW-0560">Oxidoreductase</keyword>
<keyword id="KW-0641">Proline biosynthesis</keyword>
<accession>B5BDP7</accession>
<protein>
    <recommendedName>
        <fullName evidence="1">Gamma-glutamyl phosphate reductase</fullName>
        <shortName evidence="1">GPR</shortName>
        <ecNumber evidence="1">1.2.1.41</ecNumber>
    </recommendedName>
    <alternativeName>
        <fullName evidence="1">Glutamate-5-semialdehyde dehydrogenase</fullName>
    </alternativeName>
    <alternativeName>
        <fullName evidence="1">Glutamyl-gamma-semialdehyde dehydrogenase</fullName>
        <shortName evidence="1">GSA dehydrogenase</shortName>
    </alternativeName>
</protein>